<keyword id="KW-0148">Chlorophyll</keyword>
<keyword id="KW-0150">Chloroplast</keyword>
<keyword id="KW-0157">Chromophore</keyword>
<keyword id="KW-0472">Membrane</keyword>
<keyword id="KW-0602">Photosynthesis</keyword>
<keyword id="KW-0604">Photosystem II</keyword>
<keyword id="KW-0934">Plastid</keyword>
<keyword id="KW-0793">Thylakoid</keyword>
<keyword id="KW-0812">Transmembrane</keyword>
<keyword id="KW-1133">Transmembrane helix</keyword>
<geneLocation type="chloroplast"/>
<name>PSBB_LOBMA</name>
<sequence length="508" mass="56101">MGLPWYRVHTVVLNDPGRLLSVHIMHTALVSGWAGSMALYELAVFDPSDPVLDPMWRQGMFVIPFMTRLGITNSWGGWNITGGTITNPGLWSYEGVAAAHIVFSGLCFLAAIWHWVYWDLEIFCDERTGKPSLDLPKIFGIHLFLSGVACFGFGAFHVTGLYGPGIWVSDPYGLTGKVQPVNPAWGVEGFDPFVPGGIASHHIAAGTLGILAGLFHLSVRPPQRLYKGLRMGNIETVLSSSIAAVFFAAFVVAGTMWYGSATTPIELFGPTRYQWDQGYFQQEIYRRVSAGLAENQSVSEAWSKIPEKLAFYDYIGNNPAKGGLFRAGSMDNGDGIAVGWLGHPVFRNKEGRELFVRRMPTFFETFPVVLVDGDGIVRADVPFRRAESKYSVEQVGVTVEFYGGELNGVSYSDPATVKKYARRAQLGEIFELDRATLKSDGVFRSSPRGWFTFGHASFALLFFFGHIWHGSRTLFRDVFAGIDPDLDAQVEFGAFQKLGDPTTKRQAV</sequence>
<dbReference type="EMBL" id="AP009375">
    <property type="protein sequence ID" value="BAF50575.1"/>
    <property type="molecule type" value="Genomic_DNA"/>
</dbReference>
<dbReference type="RefSeq" id="YP_001123751.1">
    <property type="nucleotide sequence ID" value="NC_009274.1"/>
</dbReference>
<dbReference type="SMR" id="A4QLM0"/>
<dbReference type="GeneID" id="4964807"/>
<dbReference type="GO" id="GO:0009535">
    <property type="term" value="C:chloroplast thylakoid membrane"/>
    <property type="evidence" value="ECO:0007669"/>
    <property type="project" value="UniProtKB-SubCell"/>
</dbReference>
<dbReference type="GO" id="GO:0009523">
    <property type="term" value="C:photosystem II"/>
    <property type="evidence" value="ECO:0007669"/>
    <property type="project" value="UniProtKB-KW"/>
</dbReference>
<dbReference type="GO" id="GO:0016168">
    <property type="term" value="F:chlorophyll binding"/>
    <property type="evidence" value="ECO:0007669"/>
    <property type="project" value="UniProtKB-UniRule"/>
</dbReference>
<dbReference type="GO" id="GO:0045156">
    <property type="term" value="F:electron transporter, transferring electrons within the cyclic electron transport pathway of photosynthesis activity"/>
    <property type="evidence" value="ECO:0007669"/>
    <property type="project" value="InterPro"/>
</dbReference>
<dbReference type="GO" id="GO:0009772">
    <property type="term" value="P:photosynthetic electron transport in photosystem II"/>
    <property type="evidence" value="ECO:0007669"/>
    <property type="project" value="InterPro"/>
</dbReference>
<dbReference type="FunFam" id="3.10.680.10:FF:000001">
    <property type="entry name" value="Photosystem II CP47 reaction center protein"/>
    <property type="match status" value="1"/>
</dbReference>
<dbReference type="Gene3D" id="3.10.680.10">
    <property type="entry name" value="Photosystem II CP47 reaction center protein"/>
    <property type="match status" value="1"/>
</dbReference>
<dbReference type="HAMAP" id="MF_01495">
    <property type="entry name" value="PSII_PsbB_CP47"/>
    <property type="match status" value="1"/>
</dbReference>
<dbReference type="InterPro" id="IPR000932">
    <property type="entry name" value="PS_antenna-like"/>
</dbReference>
<dbReference type="InterPro" id="IPR036001">
    <property type="entry name" value="PS_II_antenna-like_sf"/>
</dbReference>
<dbReference type="InterPro" id="IPR017486">
    <property type="entry name" value="PSII_PsbB"/>
</dbReference>
<dbReference type="NCBIfam" id="TIGR03039">
    <property type="entry name" value="PS_II_CP47"/>
    <property type="match status" value="1"/>
</dbReference>
<dbReference type="PANTHER" id="PTHR33180">
    <property type="entry name" value="PHOTOSYSTEM II CP43 REACTION CENTER PROTEIN"/>
    <property type="match status" value="1"/>
</dbReference>
<dbReference type="PANTHER" id="PTHR33180:SF35">
    <property type="entry name" value="PHOTOSYSTEM II CP47 REACTION CENTER PROTEIN"/>
    <property type="match status" value="1"/>
</dbReference>
<dbReference type="Pfam" id="PF00421">
    <property type="entry name" value="PSII"/>
    <property type="match status" value="1"/>
</dbReference>
<dbReference type="SUPFAM" id="SSF161077">
    <property type="entry name" value="Photosystem II antenna protein-like"/>
    <property type="match status" value="1"/>
</dbReference>
<reference key="1">
    <citation type="submission" date="2007-03" db="EMBL/GenBank/DDBJ databases">
        <title>Sequencing analysis of Lobularia maritima chloroplast DNA.</title>
        <authorList>
            <person name="Hosouchi T."/>
            <person name="Tsuruoka H."/>
            <person name="Kotani H."/>
        </authorList>
    </citation>
    <scope>NUCLEOTIDE SEQUENCE [LARGE SCALE GENOMIC DNA]</scope>
</reference>
<accession>A4QLM0</accession>
<evidence type="ECO:0000255" key="1">
    <source>
        <dbReference type="HAMAP-Rule" id="MF_01495"/>
    </source>
</evidence>
<feature type="chain" id="PRO_0000359837" description="Photosystem II CP47 reaction center protein">
    <location>
        <begin position="1"/>
        <end position="508"/>
    </location>
</feature>
<feature type="transmembrane region" description="Helical" evidence="1">
    <location>
        <begin position="21"/>
        <end position="36"/>
    </location>
</feature>
<feature type="transmembrane region" description="Helical" evidence="1">
    <location>
        <begin position="101"/>
        <end position="115"/>
    </location>
</feature>
<feature type="transmembrane region" description="Helical" evidence="1">
    <location>
        <begin position="140"/>
        <end position="156"/>
    </location>
</feature>
<feature type="transmembrane region" description="Helical" evidence="1">
    <location>
        <begin position="203"/>
        <end position="218"/>
    </location>
</feature>
<feature type="transmembrane region" description="Helical" evidence="1">
    <location>
        <begin position="237"/>
        <end position="252"/>
    </location>
</feature>
<feature type="transmembrane region" description="Helical" evidence="1">
    <location>
        <begin position="457"/>
        <end position="472"/>
    </location>
</feature>
<proteinExistence type="inferred from homology"/>
<protein>
    <recommendedName>
        <fullName evidence="1">Photosystem II CP47 reaction center protein</fullName>
    </recommendedName>
    <alternativeName>
        <fullName evidence="1">PSII 47 kDa protein</fullName>
    </alternativeName>
    <alternativeName>
        <fullName evidence="1">Protein CP-47</fullName>
    </alternativeName>
</protein>
<gene>
    <name evidence="1" type="primary">psbB</name>
</gene>
<comment type="function">
    <text evidence="1">One of the components of the core complex of photosystem II (PSII). It binds chlorophyll and helps catalyze the primary light-induced photochemical processes of PSII. PSII is a light-driven water:plastoquinone oxidoreductase, using light energy to abstract electrons from H(2)O, generating O(2) and a proton gradient subsequently used for ATP formation.</text>
</comment>
<comment type="cofactor">
    <text evidence="1">Binds multiple chlorophylls. PSII binds additional chlorophylls, carotenoids and specific lipids.</text>
</comment>
<comment type="subunit">
    <text evidence="1">PSII is composed of 1 copy each of membrane proteins PsbA, PsbB, PsbC, PsbD, PsbE, PsbF, PsbH, PsbI, PsbJ, PsbK, PsbL, PsbM, PsbT, PsbX, PsbY, PsbZ, Psb30/Ycf12, at least 3 peripheral proteins of the oxygen-evolving complex and a large number of cofactors. It forms dimeric complexes.</text>
</comment>
<comment type="subcellular location">
    <subcellularLocation>
        <location evidence="1">Plastid</location>
        <location evidence="1">Chloroplast thylakoid membrane</location>
        <topology evidence="1">Multi-pass membrane protein</topology>
    </subcellularLocation>
</comment>
<comment type="similarity">
    <text evidence="1">Belongs to the PsbB/PsbC family. PsbB subfamily.</text>
</comment>
<organism>
    <name type="scientific">Lobularia maritima</name>
    <name type="common">Sweet alyssum</name>
    <name type="synonym">Alyssum maritimum</name>
    <dbReference type="NCBI Taxonomy" id="226051"/>
    <lineage>
        <taxon>Eukaryota</taxon>
        <taxon>Viridiplantae</taxon>
        <taxon>Streptophyta</taxon>
        <taxon>Embryophyta</taxon>
        <taxon>Tracheophyta</taxon>
        <taxon>Spermatophyta</taxon>
        <taxon>Magnoliopsida</taxon>
        <taxon>eudicotyledons</taxon>
        <taxon>Gunneridae</taxon>
        <taxon>Pentapetalae</taxon>
        <taxon>rosids</taxon>
        <taxon>malvids</taxon>
        <taxon>Brassicales</taxon>
        <taxon>Brassicaceae</taxon>
        <taxon>Anastaticeae</taxon>
        <taxon>Lobularia</taxon>
    </lineage>
</organism>